<dbReference type="EC" id="2.1.2.1" evidence="1"/>
<dbReference type="EMBL" id="CP001047">
    <property type="protein sequence ID" value="ACF07496.1"/>
    <property type="molecule type" value="Genomic_DNA"/>
</dbReference>
<dbReference type="RefSeq" id="WP_012498453.1">
    <property type="nucleotide sequence ID" value="NC_011025.1"/>
</dbReference>
<dbReference type="SMR" id="B3PN94"/>
<dbReference type="STRING" id="243272.MARTH_orf743"/>
<dbReference type="KEGG" id="mat:MARTH_orf743"/>
<dbReference type="eggNOG" id="COG0112">
    <property type="taxonomic scope" value="Bacteria"/>
</dbReference>
<dbReference type="HOGENOM" id="CLU_022477_2_1_14"/>
<dbReference type="UniPathway" id="UPA00193"/>
<dbReference type="UniPathway" id="UPA00288">
    <property type="reaction ID" value="UER01023"/>
</dbReference>
<dbReference type="Proteomes" id="UP000008812">
    <property type="component" value="Chromosome"/>
</dbReference>
<dbReference type="GO" id="GO:0005829">
    <property type="term" value="C:cytosol"/>
    <property type="evidence" value="ECO:0007669"/>
    <property type="project" value="TreeGrafter"/>
</dbReference>
<dbReference type="GO" id="GO:0004372">
    <property type="term" value="F:glycine hydroxymethyltransferase activity"/>
    <property type="evidence" value="ECO:0007669"/>
    <property type="project" value="UniProtKB-UniRule"/>
</dbReference>
<dbReference type="GO" id="GO:0030170">
    <property type="term" value="F:pyridoxal phosphate binding"/>
    <property type="evidence" value="ECO:0007669"/>
    <property type="project" value="UniProtKB-UniRule"/>
</dbReference>
<dbReference type="GO" id="GO:0019264">
    <property type="term" value="P:glycine biosynthetic process from serine"/>
    <property type="evidence" value="ECO:0007669"/>
    <property type="project" value="UniProtKB-UniRule"/>
</dbReference>
<dbReference type="GO" id="GO:0035999">
    <property type="term" value="P:tetrahydrofolate interconversion"/>
    <property type="evidence" value="ECO:0007669"/>
    <property type="project" value="UniProtKB-UniRule"/>
</dbReference>
<dbReference type="CDD" id="cd00378">
    <property type="entry name" value="SHMT"/>
    <property type="match status" value="1"/>
</dbReference>
<dbReference type="FunFam" id="3.40.640.10:FF:000001">
    <property type="entry name" value="Serine hydroxymethyltransferase"/>
    <property type="match status" value="1"/>
</dbReference>
<dbReference type="Gene3D" id="3.90.1150.10">
    <property type="entry name" value="Aspartate Aminotransferase, domain 1"/>
    <property type="match status" value="1"/>
</dbReference>
<dbReference type="Gene3D" id="3.40.640.10">
    <property type="entry name" value="Type I PLP-dependent aspartate aminotransferase-like (Major domain)"/>
    <property type="match status" value="1"/>
</dbReference>
<dbReference type="HAMAP" id="MF_00051">
    <property type="entry name" value="SHMT"/>
    <property type="match status" value="1"/>
</dbReference>
<dbReference type="InterPro" id="IPR015424">
    <property type="entry name" value="PyrdxlP-dep_Trfase"/>
</dbReference>
<dbReference type="InterPro" id="IPR015421">
    <property type="entry name" value="PyrdxlP-dep_Trfase_major"/>
</dbReference>
<dbReference type="InterPro" id="IPR015422">
    <property type="entry name" value="PyrdxlP-dep_Trfase_small"/>
</dbReference>
<dbReference type="InterPro" id="IPR001085">
    <property type="entry name" value="Ser_HO-MeTrfase"/>
</dbReference>
<dbReference type="InterPro" id="IPR049943">
    <property type="entry name" value="Ser_HO-MeTrfase-like"/>
</dbReference>
<dbReference type="InterPro" id="IPR039429">
    <property type="entry name" value="SHMT-like_dom"/>
</dbReference>
<dbReference type="NCBIfam" id="NF000586">
    <property type="entry name" value="PRK00011.1"/>
    <property type="match status" value="1"/>
</dbReference>
<dbReference type="PANTHER" id="PTHR11680">
    <property type="entry name" value="SERINE HYDROXYMETHYLTRANSFERASE"/>
    <property type="match status" value="1"/>
</dbReference>
<dbReference type="PANTHER" id="PTHR11680:SF35">
    <property type="entry name" value="SERINE HYDROXYMETHYLTRANSFERASE 1"/>
    <property type="match status" value="1"/>
</dbReference>
<dbReference type="Pfam" id="PF00464">
    <property type="entry name" value="SHMT"/>
    <property type="match status" value="1"/>
</dbReference>
<dbReference type="PIRSF" id="PIRSF000412">
    <property type="entry name" value="SHMT"/>
    <property type="match status" value="1"/>
</dbReference>
<dbReference type="SUPFAM" id="SSF53383">
    <property type="entry name" value="PLP-dependent transferases"/>
    <property type="match status" value="1"/>
</dbReference>
<protein>
    <recommendedName>
        <fullName evidence="1">Serine hydroxymethyltransferase</fullName>
        <shortName evidence="1">SHMT</shortName>
        <shortName evidence="1">Serine methylase</shortName>
        <ecNumber evidence="1">2.1.2.1</ecNumber>
    </recommendedName>
</protein>
<keyword id="KW-0028">Amino-acid biosynthesis</keyword>
<keyword id="KW-0963">Cytoplasm</keyword>
<keyword id="KW-0554">One-carbon metabolism</keyword>
<keyword id="KW-0663">Pyridoxal phosphate</keyword>
<keyword id="KW-1185">Reference proteome</keyword>
<keyword id="KW-0808">Transferase</keyword>
<accession>B3PN94</accession>
<name>GLYA_META1</name>
<proteinExistence type="inferred from homology"/>
<gene>
    <name evidence="1" type="primary">glyA</name>
    <name type="ordered locus">MARTH_orf743</name>
</gene>
<evidence type="ECO:0000255" key="1">
    <source>
        <dbReference type="HAMAP-Rule" id="MF_00051"/>
    </source>
</evidence>
<organism>
    <name type="scientific">Metamycoplasma arthritidis (strain 158L3-1)</name>
    <name type="common">Mycoplasma arthritidis</name>
    <dbReference type="NCBI Taxonomy" id="243272"/>
    <lineage>
        <taxon>Bacteria</taxon>
        <taxon>Bacillati</taxon>
        <taxon>Mycoplasmatota</taxon>
        <taxon>Mycoplasmoidales</taxon>
        <taxon>Metamycoplasmataceae</taxon>
        <taxon>Metamycoplasma</taxon>
    </lineage>
</organism>
<feature type="chain" id="PRO_1000091560" description="Serine hydroxymethyltransferase">
    <location>
        <begin position="1"/>
        <end position="419"/>
    </location>
</feature>
<feature type="binding site" evidence="1">
    <location>
        <position position="118"/>
    </location>
    <ligand>
        <name>(6S)-5,6,7,8-tetrahydrofolate</name>
        <dbReference type="ChEBI" id="CHEBI:57453"/>
    </ligand>
</feature>
<feature type="binding site" evidence="1">
    <location>
        <begin position="122"/>
        <end position="124"/>
    </location>
    <ligand>
        <name>(6S)-5,6,7,8-tetrahydrofolate</name>
        <dbReference type="ChEBI" id="CHEBI:57453"/>
    </ligand>
</feature>
<feature type="binding site" evidence="1">
    <location>
        <position position="242"/>
    </location>
    <ligand>
        <name>(6S)-5,6,7,8-tetrahydrofolate</name>
        <dbReference type="ChEBI" id="CHEBI:57453"/>
    </ligand>
</feature>
<feature type="site" description="Plays an important role in substrate specificity" evidence="1">
    <location>
        <position position="225"/>
    </location>
</feature>
<feature type="modified residue" description="N6-(pyridoxal phosphate)lysine" evidence="1">
    <location>
        <position position="226"/>
    </location>
</feature>
<sequence length="419" mass="46707">MNKKVTLHDQDIADLINKESHRQEEHIELIASENYVSEDVMKAAGSSLTNKYGEGYPGKRYYGGCEFVDEIEKIAQERACKLFNAKYANVQPYSGSVANAAIYMALLNPGDSVLGLSLDSGGHLTHGYRISFSGIFYKSYTYTVNQDGVLDYDEILKIAQEVKPKMIICGYSAYSQIVDFAKFREIADAVGAYLFADIAHISGLVIANLHPSPMGYADVVATTTHKTLRGTRGAIILTNNEEIAKKIDRAVFPGNQGGPLFHQIAAKAVSFYEALQPEFIEYQRQIILNCKVFCQTFINKGVRVISGMTKNHLFTIDVKTSYNLTGKQAEQILSKMNITVNKNTIPFDTESPMVSSGIRLGVAAMTSRDFKEDEFIILANLIDKALREPNNETLHQVIKKEIAKLSHSFPIKRNYLDKK</sequence>
<comment type="function">
    <text evidence="1">Catalyzes the reversible interconversion of serine and glycine with tetrahydrofolate (THF) serving as the one-carbon carrier. This reaction serves as the major source of one-carbon groups required for the biosynthesis of purines, thymidylate, methionine, and other important biomolecules. Also exhibits THF-independent aldolase activity toward beta-hydroxyamino acids, producing glycine and aldehydes, via a retro-aldol mechanism.</text>
</comment>
<comment type="catalytic activity">
    <reaction evidence="1">
        <text>(6R)-5,10-methylene-5,6,7,8-tetrahydrofolate + glycine + H2O = (6S)-5,6,7,8-tetrahydrofolate + L-serine</text>
        <dbReference type="Rhea" id="RHEA:15481"/>
        <dbReference type="ChEBI" id="CHEBI:15377"/>
        <dbReference type="ChEBI" id="CHEBI:15636"/>
        <dbReference type="ChEBI" id="CHEBI:33384"/>
        <dbReference type="ChEBI" id="CHEBI:57305"/>
        <dbReference type="ChEBI" id="CHEBI:57453"/>
        <dbReference type="EC" id="2.1.2.1"/>
    </reaction>
</comment>
<comment type="cofactor">
    <cofactor evidence="1">
        <name>pyridoxal 5'-phosphate</name>
        <dbReference type="ChEBI" id="CHEBI:597326"/>
    </cofactor>
</comment>
<comment type="pathway">
    <text evidence="1">One-carbon metabolism; tetrahydrofolate interconversion.</text>
</comment>
<comment type="pathway">
    <text evidence="1">Amino-acid biosynthesis; glycine biosynthesis; glycine from L-serine: step 1/1.</text>
</comment>
<comment type="subunit">
    <text evidence="1">Homodimer.</text>
</comment>
<comment type="subcellular location">
    <subcellularLocation>
        <location evidence="1">Cytoplasm</location>
    </subcellularLocation>
</comment>
<comment type="similarity">
    <text evidence="1">Belongs to the SHMT family.</text>
</comment>
<reference key="1">
    <citation type="journal article" date="2008" name="Infect. Immun.">
        <title>Genome of Mycoplasma arthritidis.</title>
        <authorList>
            <person name="Dybvig K."/>
            <person name="Zuhua C."/>
            <person name="Lao P."/>
            <person name="Jordan D.S."/>
            <person name="French C.T."/>
            <person name="Tu A.H."/>
            <person name="Loraine A.E."/>
        </authorList>
    </citation>
    <scope>NUCLEOTIDE SEQUENCE [LARGE SCALE GENOMIC DNA]</scope>
    <source>
        <strain>158L3-1</strain>
    </source>
</reference>